<accession>A5UHH7</accession>
<proteinExistence type="inferred from homology"/>
<feature type="chain" id="PRO_1000020735" description="Glycerol kinase">
    <location>
        <begin position="1"/>
        <end position="503"/>
    </location>
</feature>
<feature type="binding site" evidence="1">
    <location>
        <position position="14"/>
    </location>
    <ligand>
        <name>ADP</name>
        <dbReference type="ChEBI" id="CHEBI:456216"/>
    </ligand>
</feature>
<feature type="binding site" evidence="1">
    <location>
        <position position="14"/>
    </location>
    <ligand>
        <name>ATP</name>
        <dbReference type="ChEBI" id="CHEBI:30616"/>
    </ligand>
</feature>
<feature type="binding site" evidence="1">
    <location>
        <position position="14"/>
    </location>
    <ligand>
        <name>sn-glycerol 3-phosphate</name>
        <dbReference type="ChEBI" id="CHEBI:57597"/>
    </ligand>
</feature>
<feature type="binding site" evidence="1">
    <location>
        <position position="15"/>
    </location>
    <ligand>
        <name>ATP</name>
        <dbReference type="ChEBI" id="CHEBI:30616"/>
    </ligand>
</feature>
<feature type="binding site" evidence="1">
    <location>
        <position position="16"/>
    </location>
    <ligand>
        <name>ATP</name>
        <dbReference type="ChEBI" id="CHEBI:30616"/>
    </ligand>
</feature>
<feature type="binding site" evidence="1">
    <location>
        <position position="18"/>
    </location>
    <ligand>
        <name>ADP</name>
        <dbReference type="ChEBI" id="CHEBI:456216"/>
    </ligand>
</feature>
<feature type="binding site" evidence="1">
    <location>
        <position position="84"/>
    </location>
    <ligand>
        <name>glycerol</name>
        <dbReference type="ChEBI" id="CHEBI:17754"/>
    </ligand>
</feature>
<feature type="binding site" evidence="1">
    <location>
        <position position="84"/>
    </location>
    <ligand>
        <name>sn-glycerol 3-phosphate</name>
        <dbReference type="ChEBI" id="CHEBI:57597"/>
    </ligand>
</feature>
<feature type="binding site" evidence="1">
    <location>
        <position position="85"/>
    </location>
    <ligand>
        <name>glycerol</name>
        <dbReference type="ChEBI" id="CHEBI:17754"/>
    </ligand>
</feature>
<feature type="binding site" evidence="1">
    <location>
        <position position="85"/>
    </location>
    <ligand>
        <name>sn-glycerol 3-phosphate</name>
        <dbReference type="ChEBI" id="CHEBI:57597"/>
    </ligand>
</feature>
<feature type="binding site" evidence="1">
    <location>
        <position position="136"/>
    </location>
    <ligand>
        <name>glycerol</name>
        <dbReference type="ChEBI" id="CHEBI:17754"/>
    </ligand>
</feature>
<feature type="binding site" evidence="1">
    <location>
        <position position="136"/>
    </location>
    <ligand>
        <name>sn-glycerol 3-phosphate</name>
        <dbReference type="ChEBI" id="CHEBI:57597"/>
    </ligand>
</feature>
<feature type="binding site" evidence="1">
    <location>
        <position position="246"/>
    </location>
    <ligand>
        <name>glycerol</name>
        <dbReference type="ChEBI" id="CHEBI:17754"/>
    </ligand>
</feature>
<feature type="binding site" evidence="1">
    <location>
        <position position="246"/>
    </location>
    <ligand>
        <name>sn-glycerol 3-phosphate</name>
        <dbReference type="ChEBI" id="CHEBI:57597"/>
    </ligand>
</feature>
<feature type="binding site" evidence="1">
    <location>
        <position position="247"/>
    </location>
    <ligand>
        <name>glycerol</name>
        <dbReference type="ChEBI" id="CHEBI:17754"/>
    </ligand>
</feature>
<feature type="binding site" evidence="1">
    <location>
        <position position="268"/>
    </location>
    <ligand>
        <name>ADP</name>
        <dbReference type="ChEBI" id="CHEBI:456216"/>
    </ligand>
</feature>
<feature type="binding site" evidence="1">
    <location>
        <position position="268"/>
    </location>
    <ligand>
        <name>ATP</name>
        <dbReference type="ChEBI" id="CHEBI:30616"/>
    </ligand>
</feature>
<feature type="binding site" evidence="1">
    <location>
        <position position="311"/>
    </location>
    <ligand>
        <name>ADP</name>
        <dbReference type="ChEBI" id="CHEBI:456216"/>
    </ligand>
</feature>
<feature type="binding site" evidence="1">
    <location>
        <position position="311"/>
    </location>
    <ligand>
        <name>ATP</name>
        <dbReference type="ChEBI" id="CHEBI:30616"/>
    </ligand>
</feature>
<feature type="binding site" evidence="1">
    <location>
        <position position="315"/>
    </location>
    <ligand>
        <name>ATP</name>
        <dbReference type="ChEBI" id="CHEBI:30616"/>
    </ligand>
</feature>
<feature type="binding site" evidence="1">
    <location>
        <position position="412"/>
    </location>
    <ligand>
        <name>ADP</name>
        <dbReference type="ChEBI" id="CHEBI:456216"/>
    </ligand>
</feature>
<feature type="binding site" evidence="1">
    <location>
        <position position="412"/>
    </location>
    <ligand>
        <name>ATP</name>
        <dbReference type="ChEBI" id="CHEBI:30616"/>
    </ligand>
</feature>
<feature type="binding site" evidence="1">
    <location>
        <position position="416"/>
    </location>
    <ligand>
        <name>ADP</name>
        <dbReference type="ChEBI" id="CHEBI:456216"/>
    </ligand>
</feature>
<name>GLPK_HAEIG</name>
<organism>
    <name type="scientific">Haemophilus influenzae (strain PittGG)</name>
    <dbReference type="NCBI Taxonomy" id="374931"/>
    <lineage>
        <taxon>Bacteria</taxon>
        <taxon>Pseudomonadati</taxon>
        <taxon>Pseudomonadota</taxon>
        <taxon>Gammaproteobacteria</taxon>
        <taxon>Pasteurellales</taxon>
        <taxon>Pasteurellaceae</taxon>
        <taxon>Haemophilus</taxon>
    </lineage>
</organism>
<evidence type="ECO:0000255" key="1">
    <source>
        <dbReference type="HAMAP-Rule" id="MF_00186"/>
    </source>
</evidence>
<comment type="function">
    <text evidence="1">Key enzyme in the regulation of glycerol uptake and metabolism. Catalyzes the phosphorylation of glycerol to yield sn-glycerol 3-phosphate.</text>
</comment>
<comment type="catalytic activity">
    <reaction evidence="1">
        <text>glycerol + ATP = sn-glycerol 3-phosphate + ADP + H(+)</text>
        <dbReference type="Rhea" id="RHEA:21644"/>
        <dbReference type="ChEBI" id="CHEBI:15378"/>
        <dbReference type="ChEBI" id="CHEBI:17754"/>
        <dbReference type="ChEBI" id="CHEBI:30616"/>
        <dbReference type="ChEBI" id="CHEBI:57597"/>
        <dbReference type="ChEBI" id="CHEBI:456216"/>
        <dbReference type="EC" id="2.7.1.30"/>
    </reaction>
</comment>
<comment type="activity regulation">
    <text evidence="1">Inhibited by fructose 1,6-bisphosphate (FBP).</text>
</comment>
<comment type="pathway">
    <text evidence="1">Polyol metabolism; glycerol degradation via glycerol kinase pathway; sn-glycerol 3-phosphate from glycerol: step 1/1.</text>
</comment>
<comment type="similarity">
    <text evidence="1">Belongs to the FGGY kinase family.</text>
</comment>
<dbReference type="EC" id="2.7.1.30" evidence="1"/>
<dbReference type="EMBL" id="CP000672">
    <property type="protein sequence ID" value="ABR00233.1"/>
    <property type="molecule type" value="Genomic_DNA"/>
</dbReference>
<dbReference type="SMR" id="A5UHH7"/>
<dbReference type="KEGG" id="hiq:CGSHiGG_06745"/>
<dbReference type="HOGENOM" id="CLU_009281_2_3_6"/>
<dbReference type="UniPathway" id="UPA00618">
    <property type="reaction ID" value="UER00672"/>
</dbReference>
<dbReference type="Proteomes" id="UP000001990">
    <property type="component" value="Chromosome"/>
</dbReference>
<dbReference type="GO" id="GO:0005829">
    <property type="term" value="C:cytosol"/>
    <property type="evidence" value="ECO:0007669"/>
    <property type="project" value="TreeGrafter"/>
</dbReference>
<dbReference type="GO" id="GO:0005524">
    <property type="term" value="F:ATP binding"/>
    <property type="evidence" value="ECO:0007669"/>
    <property type="project" value="UniProtKB-UniRule"/>
</dbReference>
<dbReference type="GO" id="GO:0004370">
    <property type="term" value="F:glycerol kinase activity"/>
    <property type="evidence" value="ECO:0000250"/>
    <property type="project" value="UniProtKB"/>
</dbReference>
<dbReference type="GO" id="GO:0019563">
    <property type="term" value="P:glycerol catabolic process"/>
    <property type="evidence" value="ECO:0007669"/>
    <property type="project" value="UniProtKB-UniRule"/>
</dbReference>
<dbReference type="GO" id="GO:0006071">
    <property type="term" value="P:glycerol metabolic process"/>
    <property type="evidence" value="ECO:0000250"/>
    <property type="project" value="UniProtKB"/>
</dbReference>
<dbReference type="GO" id="GO:0006072">
    <property type="term" value="P:glycerol-3-phosphate metabolic process"/>
    <property type="evidence" value="ECO:0007669"/>
    <property type="project" value="InterPro"/>
</dbReference>
<dbReference type="CDD" id="cd07786">
    <property type="entry name" value="FGGY_EcGK_like"/>
    <property type="match status" value="1"/>
</dbReference>
<dbReference type="FunFam" id="3.30.420.40:FF:000007">
    <property type="entry name" value="Glycerol kinase"/>
    <property type="match status" value="1"/>
</dbReference>
<dbReference type="FunFam" id="3.30.420.40:FF:000008">
    <property type="entry name" value="Glycerol kinase"/>
    <property type="match status" value="1"/>
</dbReference>
<dbReference type="Gene3D" id="3.30.420.40">
    <property type="match status" value="2"/>
</dbReference>
<dbReference type="HAMAP" id="MF_00186">
    <property type="entry name" value="Glycerol_kin"/>
    <property type="match status" value="1"/>
</dbReference>
<dbReference type="InterPro" id="IPR043129">
    <property type="entry name" value="ATPase_NBD"/>
</dbReference>
<dbReference type="InterPro" id="IPR000577">
    <property type="entry name" value="Carb_kinase_FGGY"/>
</dbReference>
<dbReference type="InterPro" id="IPR018483">
    <property type="entry name" value="Carb_kinase_FGGY_CS"/>
</dbReference>
<dbReference type="InterPro" id="IPR018485">
    <property type="entry name" value="FGGY_C"/>
</dbReference>
<dbReference type="InterPro" id="IPR018484">
    <property type="entry name" value="FGGY_N"/>
</dbReference>
<dbReference type="InterPro" id="IPR005999">
    <property type="entry name" value="Glycerol_kin"/>
</dbReference>
<dbReference type="NCBIfam" id="TIGR01311">
    <property type="entry name" value="glycerol_kin"/>
    <property type="match status" value="1"/>
</dbReference>
<dbReference type="NCBIfam" id="NF000756">
    <property type="entry name" value="PRK00047.1"/>
    <property type="match status" value="1"/>
</dbReference>
<dbReference type="PANTHER" id="PTHR10196:SF69">
    <property type="entry name" value="GLYCEROL KINASE"/>
    <property type="match status" value="1"/>
</dbReference>
<dbReference type="PANTHER" id="PTHR10196">
    <property type="entry name" value="SUGAR KINASE"/>
    <property type="match status" value="1"/>
</dbReference>
<dbReference type="Pfam" id="PF02782">
    <property type="entry name" value="FGGY_C"/>
    <property type="match status" value="1"/>
</dbReference>
<dbReference type="Pfam" id="PF00370">
    <property type="entry name" value="FGGY_N"/>
    <property type="match status" value="1"/>
</dbReference>
<dbReference type="PIRSF" id="PIRSF000538">
    <property type="entry name" value="GlpK"/>
    <property type="match status" value="1"/>
</dbReference>
<dbReference type="SUPFAM" id="SSF53067">
    <property type="entry name" value="Actin-like ATPase domain"/>
    <property type="match status" value="2"/>
</dbReference>
<dbReference type="PROSITE" id="PS00933">
    <property type="entry name" value="FGGY_KINASES_1"/>
    <property type="match status" value="1"/>
</dbReference>
<dbReference type="PROSITE" id="PS00445">
    <property type="entry name" value="FGGY_KINASES_2"/>
    <property type="match status" value="1"/>
</dbReference>
<reference key="1">
    <citation type="journal article" date="2007" name="Genome Biol.">
        <title>Characterization and modeling of the Haemophilus influenzae core and supragenomes based on the complete genomic sequences of Rd and 12 clinical nontypeable strains.</title>
        <authorList>
            <person name="Hogg J.S."/>
            <person name="Hu F.Z."/>
            <person name="Janto B."/>
            <person name="Boissy R."/>
            <person name="Hayes J."/>
            <person name="Keefe R."/>
            <person name="Post J.C."/>
            <person name="Ehrlich G.D."/>
        </authorList>
    </citation>
    <scope>NUCLEOTIDE SEQUENCE [LARGE SCALE GENOMIC DNA]</scope>
    <source>
        <strain>PittGG</strain>
    </source>
</reference>
<sequence>MTDKKYIIALDQGTTSSRAVLLDHNANVVEIAQREFTQIYPRAGWVEHNPMEIWATQSSTLNEVVAKSGITSDEIAAIGITNQRETTIVWEKSTGTPVYNAIVWQCRRTADITDKLKADGYEEYIRNTTGLVVDPYFSGTKVKWILDNVEGAREKAERGELLFGTVDTWLVWKLTQGRVHVTDYTNASRTMLFNIHTKQWDDKMLEILNIPRSILPEVRNSSEIYGQTNIGGKGGVRIPVAGIAGDQQAALYGHLCVHAGQAKNTYGTGCFMLLHTGNKAITSKNGLLTTIACNAKGEPEYALEGSVFIAGASIQWLRDELKIVHDSFDSEYFAQKVTDSNGVYVVPAFTGLGAPYWDPYARGAIFGLSRGANCNHIVRATLQSIAYQTRDVLEAMQSDSGERLQYLRVDGGATNNNFLMQFQADILDVNVERPVVKEVTALGAAYLAGLATGFWKDLDELRDKARVERTFSPDSDNEKRERRYKGWKKAVKRSLEWAKEDEE</sequence>
<keyword id="KW-0067">ATP-binding</keyword>
<keyword id="KW-0319">Glycerol metabolism</keyword>
<keyword id="KW-0418">Kinase</keyword>
<keyword id="KW-0547">Nucleotide-binding</keyword>
<keyword id="KW-0808">Transferase</keyword>
<gene>
    <name evidence="1" type="primary">glpK</name>
    <name type="ordered locus">CGSHiGG_06745</name>
</gene>
<protein>
    <recommendedName>
        <fullName evidence="1">Glycerol kinase</fullName>
        <ecNumber evidence="1">2.7.1.30</ecNumber>
    </recommendedName>
    <alternativeName>
        <fullName evidence="1">ATP:glycerol 3-phosphotransferase</fullName>
    </alternativeName>
    <alternativeName>
        <fullName evidence="1">Glycerokinase</fullName>
        <shortName evidence="1">GK</shortName>
    </alternativeName>
</protein>